<keyword id="KW-0028">Amino-acid biosynthesis</keyword>
<keyword id="KW-0100">Branched-chain amino acid biosynthesis</keyword>
<keyword id="KW-0460">Magnesium</keyword>
<keyword id="KW-0479">Metal-binding</keyword>
<keyword id="KW-0521">NADP</keyword>
<keyword id="KW-0560">Oxidoreductase</keyword>
<keyword id="KW-0677">Repeat</keyword>
<feature type="chain" id="PRO_0000226215" description="Ketol-acid reductoisomerase (NADP(+))">
    <location>
        <begin position="1"/>
        <end position="492"/>
    </location>
</feature>
<feature type="domain" description="KARI N-terminal Rossmann" evidence="2">
    <location>
        <begin position="15"/>
        <end position="208"/>
    </location>
</feature>
<feature type="domain" description="KARI C-terminal knotted 1" evidence="3">
    <location>
        <begin position="209"/>
        <end position="344"/>
    </location>
</feature>
<feature type="domain" description="KARI C-terminal knotted 2" evidence="3">
    <location>
        <begin position="345"/>
        <end position="485"/>
    </location>
</feature>
<feature type="active site" evidence="1">
    <location>
        <position position="132"/>
    </location>
</feature>
<feature type="binding site" evidence="1">
    <location>
        <begin position="45"/>
        <end position="48"/>
    </location>
    <ligand>
        <name>NADP(+)</name>
        <dbReference type="ChEBI" id="CHEBI:58349"/>
    </ligand>
</feature>
<feature type="binding site" evidence="1">
    <location>
        <position position="68"/>
    </location>
    <ligand>
        <name>NADP(+)</name>
        <dbReference type="ChEBI" id="CHEBI:58349"/>
    </ligand>
</feature>
<feature type="binding site" evidence="1">
    <location>
        <position position="76"/>
    </location>
    <ligand>
        <name>NADP(+)</name>
        <dbReference type="ChEBI" id="CHEBI:58349"/>
    </ligand>
</feature>
<feature type="binding site" evidence="1">
    <location>
        <position position="78"/>
    </location>
    <ligand>
        <name>NADP(+)</name>
        <dbReference type="ChEBI" id="CHEBI:58349"/>
    </ligand>
</feature>
<feature type="binding site" evidence="1">
    <location>
        <begin position="108"/>
        <end position="110"/>
    </location>
    <ligand>
        <name>NADP(+)</name>
        <dbReference type="ChEBI" id="CHEBI:58349"/>
    </ligand>
</feature>
<feature type="binding site" evidence="1">
    <location>
        <position position="158"/>
    </location>
    <ligand>
        <name>NADP(+)</name>
        <dbReference type="ChEBI" id="CHEBI:58349"/>
    </ligand>
</feature>
<feature type="binding site" evidence="1">
    <location>
        <position position="217"/>
    </location>
    <ligand>
        <name>Mg(2+)</name>
        <dbReference type="ChEBI" id="CHEBI:18420"/>
        <label>1</label>
    </ligand>
</feature>
<feature type="binding site" evidence="1">
    <location>
        <position position="217"/>
    </location>
    <ligand>
        <name>Mg(2+)</name>
        <dbReference type="ChEBI" id="CHEBI:18420"/>
        <label>2</label>
    </ligand>
</feature>
<feature type="binding site" evidence="1">
    <location>
        <position position="221"/>
    </location>
    <ligand>
        <name>Mg(2+)</name>
        <dbReference type="ChEBI" id="CHEBI:18420"/>
        <label>1</label>
    </ligand>
</feature>
<feature type="binding site" evidence="1">
    <location>
        <position position="389"/>
    </location>
    <ligand>
        <name>Mg(2+)</name>
        <dbReference type="ChEBI" id="CHEBI:18420"/>
        <label>2</label>
    </ligand>
</feature>
<feature type="binding site" evidence="1">
    <location>
        <position position="393"/>
    </location>
    <ligand>
        <name>Mg(2+)</name>
        <dbReference type="ChEBI" id="CHEBI:18420"/>
        <label>2</label>
    </ligand>
</feature>
<feature type="binding site" evidence="1">
    <location>
        <position position="414"/>
    </location>
    <ligand>
        <name>substrate</name>
    </ligand>
</feature>
<sequence>MANYFNTLNLRQQLAQLGKCRFMARDEFADEAGYLKGKKVVIVGCGAQGLNQGLNMRDSGLDVAYALRKEAIAEKRASWRKATENGFKVGTYEELIPQADLVVNLTPDKQHSAVVKAVQPLMKEGAALGYSHGFNIVEVGEQVRKDITVVMVAPKCPGTEVREEYKRGFGVPTLIAVHPENDPKGEGMAIAKAWAAATGGHRAGVLESSFVAEVKSDLMGEQTILCGMLQAGSLLCFDKLVSEGTDAAYAEKLIQFGWETITEALKQGGITLMMDRLSNPAKLRAYALSEQLKEIMAPLFQKHMDDIISGAFSSGMMADWANDDVKLLNWREETGRTAFENAPQFEGKISEQEYFDHGVLMIAMVKAGVELAFETMVDSGIIEESAYYESLHELPLIANTIARKRLYEMNVVISDTAEYGNYLFANAAVPLLKEKFMDSLQAGDLGKSIPGSAVDNAQLRDVNEAIRNHPIEAVGHKLRGYMTDMKRIAVAG</sequence>
<reference key="1">
    <citation type="journal article" date="2004" name="Proc. Natl. Acad. Sci. U.S.A.">
        <title>Insights into the evolution of Yersinia pestis through whole-genome comparison with Yersinia pseudotuberculosis.</title>
        <authorList>
            <person name="Chain P.S.G."/>
            <person name="Carniel E."/>
            <person name="Larimer F.W."/>
            <person name="Lamerdin J."/>
            <person name="Stoutland P.O."/>
            <person name="Regala W.M."/>
            <person name="Georgescu A.M."/>
            <person name="Vergez L.M."/>
            <person name="Land M.L."/>
            <person name="Motin V.L."/>
            <person name="Brubaker R.R."/>
            <person name="Fowler J."/>
            <person name="Hinnebusch J."/>
            <person name="Marceau M."/>
            <person name="Medigue C."/>
            <person name="Simonet M."/>
            <person name="Chenal-Francisque V."/>
            <person name="Souza B."/>
            <person name="Dacheux D."/>
            <person name="Elliott J.M."/>
            <person name="Derbise A."/>
            <person name="Hauser L.J."/>
            <person name="Garcia E."/>
        </authorList>
    </citation>
    <scope>NUCLEOTIDE SEQUENCE [LARGE SCALE GENOMIC DNA]</scope>
    <source>
        <strain>IP32953</strain>
    </source>
</reference>
<proteinExistence type="inferred from homology"/>
<dbReference type="EC" id="1.1.1.86" evidence="1"/>
<dbReference type="EMBL" id="BX936398">
    <property type="protein sequence ID" value="CAH19385.1"/>
    <property type="molecule type" value="Genomic_DNA"/>
</dbReference>
<dbReference type="RefSeq" id="WP_011191486.1">
    <property type="nucleotide sequence ID" value="NC_006155.1"/>
</dbReference>
<dbReference type="SMR" id="Q66G37"/>
<dbReference type="GeneID" id="96663628"/>
<dbReference type="KEGG" id="ypo:BZ17_2445"/>
<dbReference type="KEGG" id="yps:YPTB0145"/>
<dbReference type="PATRIC" id="fig|273123.14.peg.2570"/>
<dbReference type="UniPathway" id="UPA00047">
    <property type="reaction ID" value="UER00056"/>
</dbReference>
<dbReference type="UniPathway" id="UPA00049">
    <property type="reaction ID" value="UER00060"/>
</dbReference>
<dbReference type="Proteomes" id="UP000001011">
    <property type="component" value="Chromosome"/>
</dbReference>
<dbReference type="GO" id="GO:0005829">
    <property type="term" value="C:cytosol"/>
    <property type="evidence" value="ECO:0007669"/>
    <property type="project" value="TreeGrafter"/>
</dbReference>
<dbReference type="GO" id="GO:0004455">
    <property type="term" value="F:ketol-acid reductoisomerase activity"/>
    <property type="evidence" value="ECO:0007669"/>
    <property type="project" value="UniProtKB-UniRule"/>
</dbReference>
<dbReference type="GO" id="GO:0000287">
    <property type="term" value="F:magnesium ion binding"/>
    <property type="evidence" value="ECO:0007669"/>
    <property type="project" value="UniProtKB-UniRule"/>
</dbReference>
<dbReference type="GO" id="GO:0009097">
    <property type="term" value="P:isoleucine biosynthetic process"/>
    <property type="evidence" value="ECO:0007669"/>
    <property type="project" value="UniProtKB-UniRule"/>
</dbReference>
<dbReference type="GO" id="GO:0009099">
    <property type="term" value="P:L-valine biosynthetic process"/>
    <property type="evidence" value="ECO:0007669"/>
    <property type="project" value="UniProtKB-UniRule"/>
</dbReference>
<dbReference type="FunFam" id="1.10.1040.10:FF:000007">
    <property type="entry name" value="Ketol-acid reductoisomerase (NADP(+))"/>
    <property type="match status" value="1"/>
</dbReference>
<dbReference type="FunFam" id="3.40.50.720:FF:000043">
    <property type="entry name" value="Ketol-acid reductoisomerase (NADP(+))"/>
    <property type="match status" value="1"/>
</dbReference>
<dbReference type="Gene3D" id="1.10.1040.10">
    <property type="entry name" value="N-(1-d-carboxylethyl)-l-norvaline Dehydrogenase, domain 2"/>
    <property type="match status" value="1"/>
</dbReference>
<dbReference type="Gene3D" id="3.40.50.720">
    <property type="entry name" value="NAD(P)-binding Rossmann-like Domain"/>
    <property type="match status" value="1"/>
</dbReference>
<dbReference type="HAMAP" id="MF_00435">
    <property type="entry name" value="IlvC"/>
    <property type="match status" value="1"/>
</dbReference>
<dbReference type="InterPro" id="IPR008927">
    <property type="entry name" value="6-PGluconate_DH-like_C_sf"/>
</dbReference>
<dbReference type="InterPro" id="IPR013328">
    <property type="entry name" value="6PGD_dom2"/>
</dbReference>
<dbReference type="InterPro" id="IPR013023">
    <property type="entry name" value="KARI"/>
</dbReference>
<dbReference type="InterPro" id="IPR000506">
    <property type="entry name" value="KARI_C"/>
</dbReference>
<dbReference type="InterPro" id="IPR013116">
    <property type="entry name" value="KARI_N"/>
</dbReference>
<dbReference type="InterPro" id="IPR036291">
    <property type="entry name" value="NAD(P)-bd_dom_sf"/>
</dbReference>
<dbReference type="NCBIfam" id="TIGR00465">
    <property type="entry name" value="ilvC"/>
    <property type="match status" value="1"/>
</dbReference>
<dbReference type="NCBIfam" id="NF003557">
    <property type="entry name" value="PRK05225.1"/>
    <property type="match status" value="1"/>
</dbReference>
<dbReference type="PANTHER" id="PTHR21371">
    <property type="entry name" value="KETOL-ACID REDUCTOISOMERASE, MITOCHONDRIAL"/>
    <property type="match status" value="1"/>
</dbReference>
<dbReference type="PANTHER" id="PTHR21371:SF1">
    <property type="entry name" value="KETOL-ACID REDUCTOISOMERASE, MITOCHONDRIAL"/>
    <property type="match status" value="1"/>
</dbReference>
<dbReference type="Pfam" id="PF01450">
    <property type="entry name" value="KARI_C"/>
    <property type="match status" value="2"/>
</dbReference>
<dbReference type="Pfam" id="PF07991">
    <property type="entry name" value="KARI_N"/>
    <property type="match status" value="1"/>
</dbReference>
<dbReference type="SUPFAM" id="SSF48179">
    <property type="entry name" value="6-phosphogluconate dehydrogenase C-terminal domain-like"/>
    <property type="match status" value="2"/>
</dbReference>
<dbReference type="SUPFAM" id="SSF51735">
    <property type="entry name" value="NAD(P)-binding Rossmann-fold domains"/>
    <property type="match status" value="1"/>
</dbReference>
<dbReference type="PROSITE" id="PS51851">
    <property type="entry name" value="KARI_C"/>
    <property type="match status" value="2"/>
</dbReference>
<dbReference type="PROSITE" id="PS51850">
    <property type="entry name" value="KARI_N"/>
    <property type="match status" value="1"/>
</dbReference>
<evidence type="ECO:0000255" key="1">
    <source>
        <dbReference type="HAMAP-Rule" id="MF_00435"/>
    </source>
</evidence>
<evidence type="ECO:0000255" key="2">
    <source>
        <dbReference type="PROSITE-ProRule" id="PRU01197"/>
    </source>
</evidence>
<evidence type="ECO:0000255" key="3">
    <source>
        <dbReference type="PROSITE-ProRule" id="PRU01198"/>
    </source>
</evidence>
<organism>
    <name type="scientific">Yersinia pseudotuberculosis serotype I (strain IP32953)</name>
    <dbReference type="NCBI Taxonomy" id="273123"/>
    <lineage>
        <taxon>Bacteria</taxon>
        <taxon>Pseudomonadati</taxon>
        <taxon>Pseudomonadota</taxon>
        <taxon>Gammaproteobacteria</taxon>
        <taxon>Enterobacterales</taxon>
        <taxon>Yersiniaceae</taxon>
        <taxon>Yersinia</taxon>
    </lineage>
</organism>
<protein>
    <recommendedName>
        <fullName evidence="1">Ketol-acid reductoisomerase (NADP(+))</fullName>
        <shortName evidence="1">KARI</shortName>
        <ecNumber evidence="1">1.1.1.86</ecNumber>
    </recommendedName>
    <alternativeName>
        <fullName evidence="1">Acetohydroxy-acid isomeroreductase</fullName>
        <shortName evidence="1">AHIR</shortName>
    </alternativeName>
    <alternativeName>
        <fullName evidence="1">Alpha-keto-beta-hydroxylacyl reductoisomerase</fullName>
    </alternativeName>
    <alternativeName>
        <fullName evidence="1">Ketol-acid reductoisomerase type 2</fullName>
    </alternativeName>
    <alternativeName>
        <fullName evidence="1">Ketol-acid reductoisomerase type II</fullName>
    </alternativeName>
</protein>
<comment type="function">
    <text evidence="1">Involved in the biosynthesis of branched-chain amino acids (BCAA). Catalyzes an alkyl-migration followed by a ketol-acid reduction of (S)-2-acetolactate (S2AL) to yield (R)-2,3-dihydroxy-isovalerate. In the isomerase reaction, S2AL is rearranged via a Mg-dependent methyl migration to produce 3-hydroxy-3-methyl-2-ketobutyrate (HMKB). In the reductase reaction, this 2-ketoacid undergoes a metal-dependent reduction by NADPH to yield (R)-2,3-dihydroxy-isovalerate.</text>
</comment>
<comment type="catalytic activity">
    <reaction evidence="1">
        <text>(2R)-2,3-dihydroxy-3-methylbutanoate + NADP(+) = (2S)-2-acetolactate + NADPH + H(+)</text>
        <dbReference type="Rhea" id="RHEA:22068"/>
        <dbReference type="ChEBI" id="CHEBI:15378"/>
        <dbReference type="ChEBI" id="CHEBI:49072"/>
        <dbReference type="ChEBI" id="CHEBI:57783"/>
        <dbReference type="ChEBI" id="CHEBI:58349"/>
        <dbReference type="ChEBI" id="CHEBI:58476"/>
        <dbReference type="EC" id="1.1.1.86"/>
    </reaction>
</comment>
<comment type="catalytic activity">
    <reaction evidence="1">
        <text>(2R,3R)-2,3-dihydroxy-3-methylpentanoate + NADP(+) = (S)-2-ethyl-2-hydroxy-3-oxobutanoate + NADPH + H(+)</text>
        <dbReference type="Rhea" id="RHEA:13493"/>
        <dbReference type="ChEBI" id="CHEBI:15378"/>
        <dbReference type="ChEBI" id="CHEBI:49256"/>
        <dbReference type="ChEBI" id="CHEBI:49258"/>
        <dbReference type="ChEBI" id="CHEBI:57783"/>
        <dbReference type="ChEBI" id="CHEBI:58349"/>
        <dbReference type="EC" id="1.1.1.86"/>
    </reaction>
</comment>
<comment type="cofactor">
    <cofactor evidence="1">
        <name>Mg(2+)</name>
        <dbReference type="ChEBI" id="CHEBI:18420"/>
    </cofactor>
    <text evidence="1">Binds 2 magnesium ions per subunit.</text>
</comment>
<comment type="pathway">
    <text evidence="1">Amino-acid biosynthesis; L-isoleucine biosynthesis; L-isoleucine from 2-oxobutanoate: step 2/4.</text>
</comment>
<comment type="pathway">
    <text evidence="1">Amino-acid biosynthesis; L-valine biosynthesis; L-valine from pyruvate: step 2/4.</text>
</comment>
<comment type="similarity">
    <text evidence="1">Belongs to the ketol-acid reductoisomerase family.</text>
</comment>
<accession>Q66G37</accession>
<name>ILVC_YERPS</name>
<gene>
    <name evidence="1" type="primary">ilvC</name>
    <name type="ordered locus">YPTB0145</name>
</gene>